<comment type="function">
    <text>Involved in metal tolerance. Probably involved in the transport of metal-bound phytochelatins. Compartmentalizes cadmium within vacuoles, thereby protecting cells from cadmium toxicity.</text>
</comment>
<comment type="subcellular location">
    <subcellularLocation>
        <location>Vacuole membrane</location>
        <topology>Multi-pass membrane protein</topology>
    </subcellularLocation>
</comment>
<comment type="similarity">
    <text evidence="5">Belongs to the ABC transporter superfamily. ABCB family. Heavy Metal importer (TC 3.A.1.210) subfamily.</text>
</comment>
<reference key="1">
    <citation type="journal article" date="1992" name="EMBO J.">
        <title>Heavy metal tolerance in the fission yeast requires an ATP-binding cassette-type vacuolar membrane transporter.</title>
        <authorList>
            <person name="Ortiz D.F."/>
            <person name="Kreppel L."/>
            <person name="Speiser D.M."/>
            <person name="Scheel G."/>
            <person name="McDonald G."/>
            <person name="Ow D.W."/>
        </authorList>
    </citation>
    <scope>NUCLEOTIDE SEQUENCE [MRNA]</scope>
    <source>
        <strain>SP223</strain>
    </source>
</reference>
<reference key="2">
    <citation type="journal article" date="2002" name="Nature">
        <title>The genome sequence of Schizosaccharomyces pombe.</title>
        <authorList>
            <person name="Wood V."/>
            <person name="Gwilliam R."/>
            <person name="Rajandream M.A."/>
            <person name="Lyne M.H."/>
            <person name="Lyne R."/>
            <person name="Stewart A."/>
            <person name="Sgouros J.G."/>
            <person name="Peat N."/>
            <person name="Hayles J."/>
            <person name="Baker S.G."/>
            <person name="Basham D."/>
            <person name="Bowman S."/>
            <person name="Brooks K."/>
            <person name="Brown D."/>
            <person name="Brown S."/>
            <person name="Chillingworth T."/>
            <person name="Churcher C.M."/>
            <person name="Collins M."/>
            <person name="Connor R."/>
            <person name="Cronin A."/>
            <person name="Davis P."/>
            <person name="Feltwell T."/>
            <person name="Fraser A."/>
            <person name="Gentles S."/>
            <person name="Goble A."/>
            <person name="Hamlin N."/>
            <person name="Harris D.E."/>
            <person name="Hidalgo J."/>
            <person name="Hodgson G."/>
            <person name="Holroyd S."/>
            <person name="Hornsby T."/>
            <person name="Howarth S."/>
            <person name="Huckle E.J."/>
            <person name="Hunt S."/>
            <person name="Jagels K."/>
            <person name="James K.D."/>
            <person name="Jones L."/>
            <person name="Jones M."/>
            <person name="Leather S."/>
            <person name="McDonald S."/>
            <person name="McLean J."/>
            <person name="Mooney P."/>
            <person name="Moule S."/>
            <person name="Mungall K.L."/>
            <person name="Murphy L.D."/>
            <person name="Niblett D."/>
            <person name="Odell C."/>
            <person name="Oliver K."/>
            <person name="O'Neil S."/>
            <person name="Pearson D."/>
            <person name="Quail M.A."/>
            <person name="Rabbinowitsch E."/>
            <person name="Rutherford K.M."/>
            <person name="Rutter S."/>
            <person name="Saunders D."/>
            <person name="Seeger K."/>
            <person name="Sharp S."/>
            <person name="Skelton J."/>
            <person name="Simmonds M.N."/>
            <person name="Squares R."/>
            <person name="Squares S."/>
            <person name="Stevens K."/>
            <person name="Taylor K."/>
            <person name="Taylor R.G."/>
            <person name="Tivey A."/>
            <person name="Walsh S.V."/>
            <person name="Warren T."/>
            <person name="Whitehead S."/>
            <person name="Woodward J.R."/>
            <person name="Volckaert G."/>
            <person name="Aert R."/>
            <person name="Robben J."/>
            <person name="Grymonprez B."/>
            <person name="Weltjens I."/>
            <person name="Vanstreels E."/>
            <person name="Rieger M."/>
            <person name="Schaefer M."/>
            <person name="Mueller-Auer S."/>
            <person name="Gabel C."/>
            <person name="Fuchs M."/>
            <person name="Duesterhoeft A."/>
            <person name="Fritzc C."/>
            <person name="Holzer E."/>
            <person name="Moestl D."/>
            <person name="Hilbert H."/>
            <person name="Borzym K."/>
            <person name="Langer I."/>
            <person name="Beck A."/>
            <person name="Lehrach H."/>
            <person name="Reinhardt R."/>
            <person name="Pohl T.M."/>
            <person name="Eger P."/>
            <person name="Zimmermann W."/>
            <person name="Wedler H."/>
            <person name="Wambutt R."/>
            <person name="Purnelle B."/>
            <person name="Goffeau A."/>
            <person name="Cadieu E."/>
            <person name="Dreano S."/>
            <person name="Gloux S."/>
            <person name="Lelaure V."/>
            <person name="Mottier S."/>
            <person name="Galibert F."/>
            <person name="Aves S.J."/>
            <person name="Xiang Z."/>
            <person name="Hunt C."/>
            <person name="Moore K."/>
            <person name="Hurst S.M."/>
            <person name="Lucas M."/>
            <person name="Rochet M."/>
            <person name="Gaillardin C."/>
            <person name="Tallada V.A."/>
            <person name="Garzon A."/>
            <person name="Thode G."/>
            <person name="Daga R.R."/>
            <person name="Cruzado L."/>
            <person name="Jimenez J."/>
            <person name="Sanchez M."/>
            <person name="del Rey F."/>
            <person name="Benito J."/>
            <person name="Dominguez A."/>
            <person name="Revuelta J.L."/>
            <person name="Moreno S."/>
            <person name="Armstrong J."/>
            <person name="Forsburg S.L."/>
            <person name="Cerutti L."/>
            <person name="Lowe T."/>
            <person name="McCombie W.R."/>
            <person name="Paulsen I."/>
            <person name="Potashkin J."/>
            <person name="Shpakovski G.V."/>
            <person name="Ussery D."/>
            <person name="Barrell B.G."/>
            <person name="Nurse P."/>
        </authorList>
    </citation>
    <scope>NUCLEOTIDE SEQUENCE [LARGE SCALE GENOMIC DNA]</scope>
    <source>
        <strain>972 / ATCC 24843</strain>
    </source>
</reference>
<accession>Q02592</accession>
<accession>O13675</accession>
<accession>Q9UQW7</accession>
<accession>Q9USI3</accession>
<feature type="signal peptide">
    <location>
        <begin position="1"/>
        <end position="27"/>
    </location>
</feature>
<feature type="chain" id="PRO_0000000259" description="Heavy metal tolerance protein">
    <location>
        <begin position="28"/>
        <end position="830"/>
    </location>
</feature>
<feature type="transmembrane region" description="Helical" evidence="4">
    <location>
        <begin position="51"/>
        <end position="71"/>
    </location>
</feature>
<feature type="transmembrane region" description="Helical" evidence="4">
    <location>
        <begin position="88"/>
        <end position="108"/>
    </location>
</feature>
<feature type="transmembrane region" description="Helical" evidence="4">
    <location>
        <begin position="126"/>
        <end position="146"/>
    </location>
</feature>
<feature type="transmembrane region" description="Helical" evidence="4">
    <location>
        <begin position="156"/>
        <end position="176"/>
    </location>
</feature>
<feature type="transmembrane region" description="Helical" evidence="4">
    <location>
        <begin position="263"/>
        <end position="283"/>
    </location>
</feature>
<feature type="transmembrane region" description="Helical" evidence="4">
    <location>
        <begin position="304"/>
        <end position="324"/>
    </location>
</feature>
<feature type="transmembrane region" description="Helical" evidence="4">
    <location>
        <begin position="381"/>
        <end position="401"/>
    </location>
</feature>
<feature type="transmembrane region" description="Helical" evidence="4">
    <location>
        <begin position="403"/>
        <end position="423"/>
    </location>
</feature>
<feature type="transmembrane region" description="Helical" evidence="4">
    <location>
        <begin position="490"/>
        <end position="511"/>
    </location>
</feature>
<feature type="domain" description="ABC transmembrane type-1" evidence="4">
    <location>
        <begin position="265"/>
        <end position="550"/>
    </location>
</feature>
<feature type="domain" description="ABC transporter" evidence="3">
    <location>
        <begin position="584"/>
        <end position="818"/>
    </location>
</feature>
<feature type="binding site" evidence="1">
    <location>
        <begin position="429"/>
        <end position="433"/>
    </location>
    <ligand>
        <name>glutathione</name>
        <dbReference type="ChEBI" id="CHEBI:57925"/>
    </ligand>
</feature>
<feature type="binding site" evidence="1">
    <location>
        <begin position="492"/>
        <end position="495"/>
    </location>
    <ligand>
        <name>glutathione</name>
        <dbReference type="ChEBI" id="CHEBI:57925"/>
    </ligand>
</feature>
<feature type="binding site" evidence="1">
    <location>
        <position position="542"/>
    </location>
    <ligand>
        <name>glutathione</name>
        <dbReference type="ChEBI" id="CHEBI:57925"/>
    </ligand>
</feature>
<feature type="binding site" evidence="1">
    <location>
        <position position="593"/>
    </location>
    <ligand>
        <name>ATP</name>
        <dbReference type="ChEBI" id="CHEBI:30616"/>
    </ligand>
</feature>
<feature type="binding site" evidence="3">
    <location>
        <begin position="617"/>
        <end position="628"/>
    </location>
    <ligand>
        <name>ATP</name>
        <dbReference type="ChEBI" id="CHEBI:30616"/>
    </ligand>
</feature>
<feature type="glycosylation site" description="N-linked (GlcNAc...) asparagine" evidence="2">
    <location>
        <position position="150"/>
    </location>
</feature>
<feature type="glycosylation site" description="N-linked (GlcNAc...) asparagine" evidence="2">
    <location>
        <position position="350"/>
    </location>
</feature>
<feature type="sequence conflict" description="In Ref. 1; CAA78419." evidence="5" ref="1">
    <original>R</original>
    <variation>A</variation>
    <location>
        <position position="79"/>
    </location>
</feature>
<feature type="sequence conflict" description="In Ref. 1; CAA78419." evidence="5" ref="1">
    <original>S</original>
    <variation>T</variation>
    <location>
        <position position="439"/>
    </location>
</feature>
<feature type="sequence conflict" description="In Ref. 1; CAA78419." evidence="5" ref="1">
    <original>A</original>
    <variation>R</variation>
    <location>
        <position position="812"/>
    </location>
</feature>
<evidence type="ECO:0000250" key="1"/>
<evidence type="ECO:0000255" key="2"/>
<evidence type="ECO:0000255" key="3">
    <source>
        <dbReference type="PROSITE-ProRule" id="PRU00434"/>
    </source>
</evidence>
<evidence type="ECO:0000255" key="4">
    <source>
        <dbReference type="PROSITE-ProRule" id="PRU00441"/>
    </source>
</evidence>
<evidence type="ECO:0000305" key="5"/>
<sequence>MVLRYNSPRLNILELVLLYVGFFSIGSLNLLQKRKATSDPYRRKNRFGKEPIGIISWWILGIALTYVVDISNLVIYALRVPNWWPCKTTVVCLILFLLFWIIVLISCADSKALPKNADSILKAYRLSVLYVWAIDIVFETIFIVYSPHPNETFQGIVLADHVARLVLCVFATAIYLTYRRKRHTHDPLDFEERQLTEESNVNENAISQNPSTVQLGVSASTSNFGTLKSTSKKPSDKSWAEYFRSFSTLLPYLWPTKDYRLQFQIFICIVLLFLGRAVNILAPRQLGVLTEKLTKHSEKIPWSDVILFVIYRFLQGNMGVIGSLRSFLWVPVSQYAYRAISTKALRHVLNLSYDFHLNKRAGEVLTALTKGSSLNTFAEQVVFQIGPVLLDLGVAMVYFFIKFDIYFTLIVLIMTLCYCYVTVKITSWRTEARRKMVNSWRESYAVQNDAIMNFETVKNFDADDFENERYGHAVDIYLKQERKVLFSLNFLNIVQGGIFTFSLAIACLLSAYRVTFGFNTVGDFVILLTYMIQLQQPLNFFGTLYRSLQNSIIDTERLLEIFEEKPTVVEKPNAPDLKVTQGKVIFSHVSFAYDPRKPVLSDINFVAQPGKVIALVGESGGGKSTIMRILLRFFDVNSGSITIDDQDIRNVTLSSLRSSIGVVPQDSTLFNDTILYNIKYAKPSATNEEIYAAAKAAQIHDRILQFPDGYNSRVGERGLKLSGGEKQRVAVARAILKDPSIILLDEATSALDTNTERQIQAALNRLASGRTAIVIAHRLSTITNADLILCISNGRIVETGTHEELIKRDGGAYKKMWFQQAMGKTSAETH</sequence>
<protein>
    <recommendedName>
        <fullName>Heavy metal tolerance protein</fullName>
    </recommendedName>
</protein>
<keyword id="KW-0067">ATP-binding</keyword>
<keyword id="KW-0105">Cadmium resistance</keyword>
<keyword id="KW-0325">Glycoprotein</keyword>
<keyword id="KW-0472">Membrane</keyword>
<keyword id="KW-0547">Nucleotide-binding</keyword>
<keyword id="KW-1185">Reference proteome</keyword>
<keyword id="KW-0732">Signal</keyword>
<keyword id="KW-0812">Transmembrane</keyword>
<keyword id="KW-1133">Transmembrane helix</keyword>
<keyword id="KW-0813">Transport</keyword>
<keyword id="KW-0926">Vacuole</keyword>
<name>HMT1_SCHPO</name>
<organism>
    <name type="scientific">Schizosaccharomyces pombe (strain 972 / ATCC 24843)</name>
    <name type="common">Fission yeast</name>
    <dbReference type="NCBI Taxonomy" id="284812"/>
    <lineage>
        <taxon>Eukaryota</taxon>
        <taxon>Fungi</taxon>
        <taxon>Dikarya</taxon>
        <taxon>Ascomycota</taxon>
        <taxon>Taphrinomycotina</taxon>
        <taxon>Schizosaccharomycetes</taxon>
        <taxon>Schizosaccharomycetales</taxon>
        <taxon>Schizosaccharomycetaceae</taxon>
        <taxon>Schizosaccharomyces</taxon>
    </lineage>
</organism>
<gene>
    <name type="primary">hmt1</name>
    <name type="ORF">SPCC737.09c</name>
    <name type="ORF">SPCC74.08c</name>
</gene>
<dbReference type="EMBL" id="Z14055">
    <property type="protein sequence ID" value="CAA78419.1"/>
    <property type="molecule type" value="mRNA"/>
</dbReference>
<dbReference type="EMBL" id="CU329672">
    <property type="protein sequence ID" value="CAA20865.1"/>
    <property type="molecule type" value="Genomic_DNA"/>
</dbReference>
<dbReference type="PIR" id="S25198">
    <property type="entry name" value="S25198"/>
</dbReference>
<dbReference type="RefSeq" id="NP_588371.3">
    <property type="nucleotide sequence ID" value="NM_001023362.3"/>
</dbReference>
<dbReference type="SMR" id="Q02592"/>
<dbReference type="BioGRID" id="280210">
    <property type="interactions" value="22"/>
</dbReference>
<dbReference type="FunCoup" id="Q02592">
    <property type="interactions" value="84"/>
</dbReference>
<dbReference type="STRING" id="284812.Q02592"/>
<dbReference type="TCDB" id="3.A.1.210.2">
    <property type="family name" value="the atp-binding cassette (abc) superfamily"/>
</dbReference>
<dbReference type="GlyCosmos" id="Q02592">
    <property type="glycosylation" value="2 sites, No reported glycans"/>
</dbReference>
<dbReference type="iPTMnet" id="Q02592"/>
<dbReference type="PaxDb" id="4896-SPCC737.09c.1"/>
<dbReference type="EnsemblFungi" id="SPCC737.09c.1">
    <property type="protein sequence ID" value="SPCC737.09c.1:pep"/>
    <property type="gene ID" value="SPCC737.09c"/>
</dbReference>
<dbReference type="GeneID" id="3361134"/>
<dbReference type="KEGG" id="spo:3361134"/>
<dbReference type="PomBase" id="SPCC737.09c">
    <property type="gene designation" value="hmt1"/>
</dbReference>
<dbReference type="VEuPathDB" id="FungiDB:SPCC737.09c"/>
<dbReference type="eggNOG" id="KOG0056">
    <property type="taxonomic scope" value="Eukaryota"/>
</dbReference>
<dbReference type="HOGENOM" id="CLU_000604_6_1_1"/>
<dbReference type="InParanoid" id="Q02592"/>
<dbReference type="OMA" id="WRANMRR"/>
<dbReference type="PhylomeDB" id="Q02592"/>
<dbReference type="Reactome" id="R-SPO-1369007">
    <property type="pathway name" value="Mitochondrial ABC transporters"/>
</dbReference>
<dbReference type="PRO" id="PR:Q02592"/>
<dbReference type="Proteomes" id="UP000002485">
    <property type="component" value="Chromosome III"/>
</dbReference>
<dbReference type="GO" id="GO:0000324">
    <property type="term" value="C:fungal-type vacuole"/>
    <property type="evidence" value="ECO:0000314"/>
    <property type="project" value="PomBase"/>
</dbReference>
<dbReference type="GO" id="GO:0000329">
    <property type="term" value="C:fungal-type vacuole membrane"/>
    <property type="evidence" value="ECO:0000314"/>
    <property type="project" value="PomBase"/>
</dbReference>
<dbReference type="GO" id="GO:0005774">
    <property type="term" value="C:vacuolar membrane"/>
    <property type="evidence" value="ECO:0000318"/>
    <property type="project" value="GO_Central"/>
</dbReference>
<dbReference type="GO" id="GO:0044604">
    <property type="term" value="F:ABC-type phytochelatin transporter activity"/>
    <property type="evidence" value="ECO:0000315"/>
    <property type="project" value="PomBase"/>
</dbReference>
<dbReference type="GO" id="GO:0005524">
    <property type="term" value="F:ATP binding"/>
    <property type="evidence" value="ECO:0000255"/>
    <property type="project" value="PomBase"/>
</dbReference>
<dbReference type="GO" id="GO:0016887">
    <property type="term" value="F:ATP hydrolysis activity"/>
    <property type="evidence" value="ECO:0007669"/>
    <property type="project" value="InterPro"/>
</dbReference>
<dbReference type="GO" id="GO:0042626">
    <property type="term" value="F:ATPase-coupled transmembrane transporter activity"/>
    <property type="evidence" value="ECO:0000315"/>
    <property type="project" value="PomBase"/>
</dbReference>
<dbReference type="GO" id="GO:0036249">
    <property type="term" value="P:cadmium ion import into vacuole"/>
    <property type="evidence" value="ECO:0000315"/>
    <property type="project" value="PomBase"/>
</dbReference>
<dbReference type="GO" id="GO:0098849">
    <property type="term" value="P:cellular detoxification of cadmium ion"/>
    <property type="evidence" value="ECO:0000315"/>
    <property type="project" value="PomBase"/>
</dbReference>
<dbReference type="GO" id="GO:0071996">
    <property type="term" value="P:glutathione transmembrane import into vacuole"/>
    <property type="evidence" value="ECO:0000315"/>
    <property type="project" value="PomBase"/>
</dbReference>
<dbReference type="GO" id="GO:0036246">
    <property type="term" value="P:phytochelatin 2 import into vacuole"/>
    <property type="evidence" value="ECO:0000315"/>
    <property type="project" value="PomBase"/>
</dbReference>
<dbReference type="GO" id="GO:0071995">
    <property type="term" value="P:phytochelatin import into vacuole"/>
    <property type="evidence" value="ECO:0000315"/>
    <property type="project" value="PomBase"/>
</dbReference>
<dbReference type="GO" id="GO:0055085">
    <property type="term" value="P:transmembrane transport"/>
    <property type="evidence" value="ECO:0000318"/>
    <property type="project" value="GO_Central"/>
</dbReference>
<dbReference type="CDD" id="cd18583">
    <property type="entry name" value="ABC_6TM_HMT1"/>
    <property type="match status" value="1"/>
</dbReference>
<dbReference type="CDD" id="cd03253">
    <property type="entry name" value="ABCC_ATM1_transporter"/>
    <property type="match status" value="1"/>
</dbReference>
<dbReference type="FunFam" id="3.40.50.300:FF:000186">
    <property type="entry name" value="ATP-binding cassette sub-family B member 7, mitochondrial"/>
    <property type="match status" value="1"/>
</dbReference>
<dbReference type="FunFam" id="1.20.1560.10:FF:000050">
    <property type="entry name" value="Vacuolar ABC heavy metal transporter (Hmt1)"/>
    <property type="match status" value="1"/>
</dbReference>
<dbReference type="Gene3D" id="1.20.1560.10">
    <property type="entry name" value="ABC transporter type 1, transmembrane domain"/>
    <property type="match status" value="1"/>
</dbReference>
<dbReference type="Gene3D" id="3.40.50.300">
    <property type="entry name" value="P-loop containing nucleotide triphosphate hydrolases"/>
    <property type="match status" value="1"/>
</dbReference>
<dbReference type="InterPro" id="IPR003593">
    <property type="entry name" value="AAA+_ATPase"/>
</dbReference>
<dbReference type="InterPro" id="IPR011527">
    <property type="entry name" value="ABC1_TM_dom"/>
</dbReference>
<dbReference type="InterPro" id="IPR036640">
    <property type="entry name" value="ABC1_TM_sf"/>
</dbReference>
<dbReference type="InterPro" id="IPR003439">
    <property type="entry name" value="ABC_transporter-like_ATP-bd"/>
</dbReference>
<dbReference type="InterPro" id="IPR017871">
    <property type="entry name" value="ABC_transporter-like_CS"/>
</dbReference>
<dbReference type="InterPro" id="IPR027417">
    <property type="entry name" value="P-loop_NTPase"/>
</dbReference>
<dbReference type="InterPro" id="IPR039421">
    <property type="entry name" value="Type_1_exporter"/>
</dbReference>
<dbReference type="PANTHER" id="PTHR24221">
    <property type="entry name" value="ATP-BINDING CASSETTE SUB-FAMILY B"/>
    <property type="match status" value="1"/>
</dbReference>
<dbReference type="PANTHER" id="PTHR24221:SF651">
    <property type="entry name" value="HEAVY METAL TOLERANCE PROTEIN"/>
    <property type="match status" value="1"/>
</dbReference>
<dbReference type="Pfam" id="PF00664">
    <property type="entry name" value="ABC_membrane"/>
    <property type="match status" value="1"/>
</dbReference>
<dbReference type="Pfam" id="PF00005">
    <property type="entry name" value="ABC_tran"/>
    <property type="match status" value="1"/>
</dbReference>
<dbReference type="SMART" id="SM00382">
    <property type="entry name" value="AAA"/>
    <property type="match status" value="1"/>
</dbReference>
<dbReference type="SUPFAM" id="SSF90123">
    <property type="entry name" value="ABC transporter transmembrane region"/>
    <property type="match status" value="1"/>
</dbReference>
<dbReference type="SUPFAM" id="SSF52540">
    <property type="entry name" value="P-loop containing nucleoside triphosphate hydrolases"/>
    <property type="match status" value="1"/>
</dbReference>
<dbReference type="PROSITE" id="PS50929">
    <property type="entry name" value="ABC_TM1F"/>
    <property type="match status" value="1"/>
</dbReference>
<dbReference type="PROSITE" id="PS00211">
    <property type="entry name" value="ABC_TRANSPORTER_1"/>
    <property type="match status" value="1"/>
</dbReference>
<dbReference type="PROSITE" id="PS50893">
    <property type="entry name" value="ABC_TRANSPORTER_2"/>
    <property type="match status" value="1"/>
</dbReference>
<proteinExistence type="evidence at transcript level"/>